<protein>
    <recommendedName>
        <fullName evidence="1">Light-independent protochlorophyllide reductase subunit B</fullName>
        <shortName evidence="1">DPOR subunit B</shortName>
        <shortName evidence="1">LI-POR subunit B</shortName>
        <ecNumber evidence="1">1.3.7.7</ecNumber>
    </recommendedName>
</protein>
<organism>
    <name type="scientific">Prochlorococcus marinus (strain MIT 9303)</name>
    <dbReference type="NCBI Taxonomy" id="59922"/>
    <lineage>
        <taxon>Bacteria</taxon>
        <taxon>Bacillati</taxon>
        <taxon>Cyanobacteriota</taxon>
        <taxon>Cyanophyceae</taxon>
        <taxon>Synechococcales</taxon>
        <taxon>Prochlorococcaceae</taxon>
        <taxon>Prochlorococcus</taxon>
    </lineage>
</organism>
<evidence type="ECO:0000255" key="1">
    <source>
        <dbReference type="HAMAP-Rule" id="MF_00353"/>
    </source>
</evidence>
<evidence type="ECO:0000256" key="2">
    <source>
        <dbReference type="SAM" id="MobiDB-lite"/>
    </source>
</evidence>
<reference key="1">
    <citation type="journal article" date="2007" name="PLoS Genet.">
        <title>Patterns and implications of gene gain and loss in the evolution of Prochlorococcus.</title>
        <authorList>
            <person name="Kettler G.C."/>
            <person name="Martiny A.C."/>
            <person name="Huang K."/>
            <person name="Zucker J."/>
            <person name="Coleman M.L."/>
            <person name="Rodrigue S."/>
            <person name="Chen F."/>
            <person name="Lapidus A."/>
            <person name="Ferriera S."/>
            <person name="Johnson J."/>
            <person name="Steglich C."/>
            <person name="Church G.M."/>
            <person name="Richardson P."/>
            <person name="Chisholm S.W."/>
        </authorList>
    </citation>
    <scope>NUCLEOTIDE SEQUENCE [LARGE SCALE GENOMIC DNA]</scope>
    <source>
        <strain>MIT 9303</strain>
    </source>
</reference>
<proteinExistence type="inferred from homology"/>
<gene>
    <name evidence="1" type="primary">chlB</name>
    <name type="ordered locus">P9303_07941</name>
</gene>
<sequence length="536" mass="59240">MELTLWTYEGPPHVGAMRIASSMEGVHYVLHAPQGDTYADLLFTMIERRGRRPPVTYTTFQARDLGGDTAELVKGHLREAVERFNPEALLVGESCTAELIQDQPGSLASGMGFNMPVVGIELPAYSKKENWGASETFYQLVRGILSKQPSEESGVSHSPAAWKSEGRRPRVNLLGPTLLGFRCRDDILELEKLLNQHGIDVHVVAPLEARPADLMRLPNADLNVCLYPEIAEATCLWLERNYGMPFSKTVPIGVGATKDFLEELHQLLEMPAPNPGEGAEQSKLPWYSQSVDSNYLTGKRVFIFGDGTHAIAAARIADQELGFKVVGLGTYSREMARPVRAAAKELGLEALISDDYLAVEAAMAEAAPELVLGTQMERHSAKRLGIPCAVISTPMHVQDVPARYSPQMGWEGANVIFDSWVHPLMMGLEEHLIGMFRHDFEFVDGHQSHLGHLGGHQSQTEQQQSQAATNPSTQSNTDSSSEESPLWTPEGEAELAKIPFFVRGKVRRNTEKYARQAGCRRIDSETVYDAKVHFRA</sequence>
<comment type="function">
    <text evidence="1">Component of the dark-operative protochlorophyllide reductase (DPOR) that uses Mg-ATP and reduced ferredoxin to reduce ring D of protochlorophyllide (Pchlide) to form chlorophyllide a (Chlide). This reaction is light-independent. The NB-protein (ChlN-ChlB) is the catalytic component of the complex.</text>
</comment>
<comment type="catalytic activity">
    <reaction evidence="1">
        <text>chlorophyllide a + oxidized 2[4Fe-4S]-[ferredoxin] + 2 ADP + 2 phosphate = protochlorophyllide a + reduced 2[4Fe-4S]-[ferredoxin] + 2 ATP + 2 H2O</text>
        <dbReference type="Rhea" id="RHEA:28202"/>
        <dbReference type="Rhea" id="RHEA-COMP:10002"/>
        <dbReference type="Rhea" id="RHEA-COMP:10004"/>
        <dbReference type="ChEBI" id="CHEBI:15377"/>
        <dbReference type="ChEBI" id="CHEBI:30616"/>
        <dbReference type="ChEBI" id="CHEBI:33722"/>
        <dbReference type="ChEBI" id="CHEBI:33723"/>
        <dbReference type="ChEBI" id="CHEBI:43474"/>
        <dbReference type="ChEBI" id="CHEBI:83348"/>
        <dbReference type="ChEBI" id="CHEBI:83350"/>
        <dbReference type="ChEBI" id="CHEBI:456216"/>
        <dbReference type="EC" id="1.3.7.7"/>
    </reaction>
</comment>
<comment type="cofactor">
    <cofactor evidence="1">
        <name>[4Fe-4S] cluster</name>
        <dbReference type="ChEBI" id="CHEBI:49883"/>
    </cofactor>
    <text evidence="1">Binds 1 [4Fe-4S] cluster per heterodimer. The cluster is bound at the heterodimer interface by residues from both subunits.</text>
</comment>
<comment type="pathway">
    <text evidence="1">Porphyrin-containing compound metabolism; chlorophyll biosynthesis (light-independent).</text>
</comment>
<comment type="subunit">
    <text evidence="1">Protochlorophyllide reductase is composed of three subunits; ChlL, ChlN and ChlB. Forms a heterotetramer of two ChlB and two ChlN subunits.</text>
</comment>
<comment type="similarity">
    <text evidence="1">Belongs to the ChlB/BchB/BchZ family.</text>
</comment>
<accession>A2C7T5</accession>
<dbReference type="EC" id="1.3.7.7" evidence="1"/>
<dbReference type="EMBL" id="CP000554">
    <property type="protein sequence ID" value="ABM77545.1"/>
    <property type="molecule type" value="Genomic_DNA"/>
</dbReference>
<dbReference type="RefSeq" id="WP_011825459.1">
    <property type="nucleotide sequence ID" value="NC_008820.1"/>
</dbReference>
<dbReference type="SMR" id="A2C7T5"/>
<dbReference type="STRING" id="59922.P9303_07941"/>
<dbReference type="KEGG" id="pmf:P9303_07941"/>
<dbReference type="HOGENOM" id="CLU_025470_0_0_3"/>
<dbReference type="BioCyc" id="PMAR59922:G1G80-720-MONOMER"/>
<dbReference type="UniPathway" id="UPA00670"/>
<dbReference type="Proteomes" id="UP000002274">
    <property type="component" value="Chromosome"/>
</dbReference>
<dbReference type="GO" id="GO:0051539">
    <property type="term" value="F:4 iron, 4 sulfur cluster binding"/>
    <property type="evidence" value="ECO:0007669"/>
    <property type="project" value="UniProtKB-UniRule"/>
</dbReference>
<dbReference type="GO" id="GO:0005524">
    <property type="term" value="F:ATP binding"/>
    <property type="evidence" value="ECO:0007669"/>
    <property type="project" value="UniProtKB-UniRule"/>
</dbReference>
<dbReference type="GO" id="GO:0046872">
    <property type="term" value="F:metal ion binding"/>
    <property type="evidence" value="ECO:0007669"/>
    <property type="project" value="UniProtKB-KW"/>
</dbReference>
<dbReference type="GO" id="GO:0016730">
    <property type="term" value="F:oxidoreductase activity, acting on iron-sulfur proteins as donors"/>
    <property type="evidence" value="ECO:0007669"/>
    <property type="project" value="InterPro"/>
</dbReference>
<dbReference type="GO" id="GO:0016636">
    <property type="term" value="F:oxidoreductase activity, acting on the CH-CH group of donors, iron-sulfur protein as acceptor"/>
    <property type="evidence" value="ECO:0007669"/>
    <property type="project" value="UniProtKB-UniRule"/>
</dbReference>
<dbReference type="GO" id="GO:0036068">
    <property type="term" value="P:light-independent chlorophyll biosynthetic process"/>
    <property type="evidence" value="ECO:0007669"/>
    <property type="project" value="UniProtKB-UniRule"/>
</dbReference>
<dbReference type="GO" id="GO:0019685">
    <property type="term" value="P:photosynthesis, dark reaction"/>
    <property type="evidence" value="ECO:0007669"/>
    <property type="project" value="InterPro"/>
</dbReference>
<dbReference type="Gene3D" id="1.20.89.20">
    <property type="match status" value="1"/>
</dbReference>
<dbReference type="Gene3D" id="3.40.50.1980">
    <property type="entry name" value="Nitrogenase molybdenum iron protein domain"/>
    <property type="match status" value="3"/>
</dbReference>
<dbReference type="Gene3D" id="1.10.8.550">
    <property type="entry name" value="Proto-chlorophyllide reductase 57 kD subunit B"/>
    <property type="match status" value="1"/>
</dbReference>
<dbReference type="HAMAP" id="MF_00353">
    <property type="entry name" value="ChlB_BchB"/>
    <property type="match status" value="1"/>
</dbReference>
<dbReference type="InterPro" id="IPR050152">
    <property type="entry name" value="ChlB/BchB/BchZ"/>
</dbReference>
<dbReference type="InterPro" id="IPR013580">
    <property type="entry name" value="LI-POR_suB-like_C"/>
</dbReference>
<dbReference type="InterPro" id="IPR000510">
    <property type="entry name" value="Nase/OxRdtase_comp1"/>
</dbReference>
<dbReference type="InterPro" id="IPR042298">
    <property type="entry name" value="P-CP_red_C"/>
</dbReference>
<dbReference type="InterPro" id="IPR005969">
    <property type="entry name" value="Protochl_reductB"/>
</dbReference>
<dbReference type="InterPro" id="IPR016209">
    <property type="entry name" value="Protochlorophyllide_Rdtase"/>
</dbReference>
<dbReference type="NCBIfam" id="TIGR01278">
    <property type="entry name" value="DPOR_BchB"/>
    <property type="match status" value="1"/>
</dbReference>
<dbReference type="NCBIfam" id="NF002790">
    <property type="entry name" value="PRK02910.1-4"/>
    <property type="match status" value="1"/>
</dbReference>
<dbReference type="PANTHER" id="PTHR33712">
    <property type="entry name" value="LIGHT-INDEPENDENT PROTOCHLOROPHYLLIDE REDUCTASE SUBUNIT B"/>
    <property type="match status" value="1"/>
</dbReference>
<dbReference type="PANTHER" id="PTHR33712:SF7">
    <property type="entry name" value="LIGHT-INDEPENDENT PROTOCHLOROPHYLLIDE REDUCTASE SUBUNIT B"/>
    <property type="match status" value="1"/>
</dbReference>
<dbReference type="Pfam" id="PF00148">
    <property type="entry name" value="Oxidored_nitro"/>
    <property type="match status" value="1"/>
</dbReference>
<dbReference type="Pfam" id="PF08369">
    <property type="entry name" value="PCP_red"/>
    <property type="match status" value="1"/>
</dbReference>
<dbReference type="PIRSF" id="PIRSF000163">
    <property type="entry name" value="PCP_ChlB"/>
    <property type="match status" value="1"/>
</dbReference>
<dbReference type="SUPFAM" id="SSF53807">
    <property type="entry name" value="Helical backbone' metal receptor"/>
    <property type="match status" value="1"/>
</dbReference>
<keyword id="KW-0004">4Fe-4S</keyword>
<keyword id="KW-0067">ATP-binding</keyword>
<keyword id="KW-0149">Chlorophyll biosynthesis</keyword>
<keyword id="KW-0408">Iron</keyword>
<keyword id="KW-0411">Iron-sulfur</keyword>
<keyword id="KW-0479">Metal-binding</keyword>
<keyword id="KW-0547">Nucleotide-binding</keyword>
<keyword id="KW-0560">Oxidoreductase</keyword>
<keyword id="KW-0602">Photosynthesis</keyword>
<name>CHLB_PROM3</name>
<feature type="chain" id="PRO_1000048408" description="Light-independent protochlorophyllide reductase subunit B">
    <location>
        <begin position="1"/>
        <end position="536"/>
    </location>
</feature>
<feature type="region of interest" description="Disordered" evidence="2">
    <location>
        <begin position="447"/>
        <end position="489"/>
    </location>
</feature>
<feature type="compositionally biased region" description="Low complexity" evidence="2">
    <location>
        <begin position="448"/>
        <end position="469"/>
    </location>
</feature>
<feature type="compositionally biased region" description="Polar residues" evidence="2">
    <location>
        <begin position="470"/>
        <end position="483"/>
    </location>
</feature>
<feature type="active site" description="Proton donor" evidence="1">
    <location>
        <position position="292"/>
    </location>
</feature>
<feature type="binding site" evidence="1">
    <location>
        <position position="36"/>
    </location>
    <ligand>
        <name>[4Fe-4S] cluster</name>
        <dbReference type="ChEBI" id="CHEBI:49883"/>
        <note>ligand shared with heterodimeric partner</note>
    </ligand>
</feature>
<feature type="binding site" evidence="1">
    <location>
        <begin position="427"/>
        <end position="428"/>
    </location>
    <ligand>
        <name>substrate</name>
    </ligand>
</feature>